<feature type="chain" id="PRO_1000045859" description="Flagellar hook-basal body complex protein FliE">
    <location>
        <begin position="1"/>
        <end position="122"/>
    </location>
</feature>
<reference key="1">
    <citation type="journal article" date="2011" name="Appl. Environ. Microbiol.">
        <title>Genomic potential of Marinobacter aquaeolei, a biogeochemical 'opportunitroph'.</title>
        <authorList>
            <person name="Singer E."/>
            <person name="Webb E.A."/>
            <person name="Nelson W.C."/>
            <person name="Heidelberg J.F."/>
            <person name="Ivanova N."/>
            <person name="Pati A."/>
            <person name="Edwards K.J."/>
        </authorList>
    </citation>
    <scope>NUCLEOTIDE SEQUENCE [LARGE SCALE GENOMIC DNA]</scope>
    <source>
        <strain>ATCC 700491 / DSM 11845 / VT8</strain>
    </source>
</reference>
<name>FLIE_MARN8</name>
<accession>A1U260</accession>
<comment type="subcellular location">
    <subcellularLocation>
        <location evidence="1">Bacterial flagellum basal body</location>
    </subcellularLocation>
</comment>
<comment type="similarity">
    <text evidence="1">Belongs to the FliE family.</text>
</comment>
<evidence type="ECO:0000255" key="1">
    <source>
        <dbReference type="HAMAP-Rule" id="MF_00724"/>
    </source>
</evidence>
<protein>
    <recommendedName>
        <fullName evidence="1">Flagellar hook-basal body complex protein FliE</fullName>
    </recommendedName>
</protein>
<gene>
    <name evidence="1" type="primary">fliE</name>
    <name type="ordered locus">Maqu_1998</name>
</gene>
<dbReference type="EMBL" id="CP000514">
    <property type="protein sequence ID" value="ABM19079.1"/>
    <property type="molecule type" value="Genomic_DNA"/>
</dbReference>
<dbReference type="RefSeq" id="WP_011785472.1">
    <property type="nucleotide sequence ID" value="NC_008740.1"/>
</dbReference>
<dbReference type="SMR" id="A1U260"/>
<dbReference type="STRING" id="351348.Maqu_1998"/>
<dbReference type="GeneID" id="31820776"/>
<dbReference type="KEGG" id="maq:Maqu_1998"/>
<dbReference type="eggNOG" id="COG1677">
    <property type="taxonomic scope" value="Bacteria"/>
</dbReference>
<dbReference type="HOGENOM" id="CLU_147249_0_0_6"/>
<dbReference type="OrthoDB" id="8909229at2"/>
<dbReference type="Proteomes" id="UP000000998">
    <property type="component" value="Chromosome"/>
</dbReference>
<dbReference type="GO" id="GO:0009425">
    <property type="term" value="C:bacterial-type flagellum basal body"/>
    <property type="evidence" value="ECO:0007669"/>
    <property type="project" value="UniProtKB-SubCell"/>
</dbReference>
<dbReference type="GO" id="GO:0003774">
    <property type="term" value="F:cytoskeletal motor activity"/>
    <property type="evidence" value="ECO:0007669"/>
    <property type="project" value="InterPro"/>
</dbReference>
<dbReference type="GO" id="GO:0005198">
    <property type="term" value="F:structural molecule activity"/>
    <property type="evidence" value="ECO:0007669"/>
    <property type="project" value="InterPro"/>
</dbReference>
<dbReference type="GO" id="GO:0071973">
    <property type="term" value="P:bacterial-type flagellum-dependent cell motility"/>
    <property type="evidence" value="ECO:0007669"/>
    <property type="project" value="InterPro"/>
</dbReference>
<dbReference type="HAMAP" id="MF_00724">
    <property type="entry name" value="FliE"/>
    <property type="match status" value="1"/>
</dbReference>
<dbReference type="InterPro" id="IPR001624">
    <property type="entry name" value="FliE"/>
</dbReference>
<dbReference type="NCBIfam" id="TIGR00205">
    <property type="entry name" value="fliE"/>
    <property type="match status" value="1"/>
</dbReference>
<dbReference type="PANTHER" id="PTHR34653">
    <property type="match status" value="1"/>
</dbReference>
<dbReference type="PANTHER" id="PTHR34653:SF1">
    <property type="entry name" value="FLAGELLAR HOOK-BASAL BODY COMPLEX PROTEIN FLIE"/>
    <property type="match status" value="1"/>
</dbReference>
<dbReference type="Pfam" id="PF02049">
    <property type="entry name" value="FliE"/>
    <property type="match status" value="1"/>
</dbReference>
<dbReference type="PRINTS" id="PR01006">
    <property type="entry name" value="FLGHOOKFLIE"/>
</dbReference>
<proteinExistence type="inferred from homology"/>
<sequence>MVQRADINNVLSEIRNLRTQMMQNQRIEQDQSVRGRIDGPRQVQETQEVPSFSDMLGKAVNNVHEVQSQASELRTAYEMGDPNVDITRVMIAAQKSSVSFEALTQVRNRVVRAYEDIMNMPI</sequence>
<keyword id="KW-0975">Bacterial flagellum</keyword>
<organism>
    <name type="scientific">Marinobacter nauticus (strain ATCC 700491 / DSM 11845 / VT8)</name>
    <name type="common">Marinobacter aquaeolei</name>
    <dbReference type="NCBI Taxonomy" id="351348"/>
    <lineage>
        <taxon>Bacteria</taxon>
        <taxon>Pseudomonadati</taxon>
        <taxon>Pseudomonadota</taxon>
        <taxon>Gammaproteobacteria</taxon>
        <taxon>Pseudomonadales</taxon>
        <taxon>Marinobacteraceae</taxon>
        <taxon>Marinobacter</taxon>
    </lineage>
</organism>